<comment type="function">
    <text evidence="1">The beta subunit is responsible for the synthesis of L-tryptophan from indole and L-serine.</text>
</comment>
<comment type="catalytic activity">
    <reaction evidence="1">
        <text>(1S,2R)-1-C-(indol-3-yl)glycerol 3-phosphate + L-serine = D-glyceraldehyde 3-phosphate + L-tryptophan + H2O</text>
        <dbReference type="Rhea" id="RHEA:10532"/>
        <dbReference type="ChEBI" id="CHEBI:15377"/>
        <dbReference type="ChEBI" id="CHEBI:33384"/>
        <dbReference type="ChEBI" id="CHEBI:57912"/>
        <dbReference type="ChEBI" id="CHEBI:58866"/>
        <dbReference type="ChEBI" id="CHEBI:59776"/>
        <dbReference type="EC" id="4.2.1.20"/>
    </reaction>
</comment>
<comment type="cofactor">
    <cofactor evidence="1">
        <name>pyridoxal 5'-phosphate</name>
        <dbReference type="ChEBI" id="CHEBI:597326"/>
    </cofactor>
</comment>
<comment type="pathway">
    <text evidence="1">Amino-acid biosynthesis; L-tryptophan biosynthesis; L-tryptophan from chorismate: step 5/5.</text>
</comment>
<comment type="subunit">
    <text evidence="1">Tetramer of two alpha and two beta chains.</text>
</comment>
<comment type="similarity">
    <text evidence="1">Belongs to the TrpB family.</text>
</comment>
<proteinExistence type="inferred from homology"/>
<dbReference type="EC" id="4.2.1.20" evidence="1"/>
<dbReference type="EMBL" id="AM942759">
    <property type="protein sequence ID" value="CAR42849.1"/>
    <property type="molecule type" value="Genomic_DNA"/>
</dbReference>
<dbReference type="RefSeq" id="WP_004243066.1">
    <property type="nucleotide sequence ID" value="NC_010554.1"/>
</dbReference>
<dbReference type="SMR" id="B4EWH7"/>
<dbReference type="EnsemblBacteria" id="CAR42849">
    <property type="protein sequence ID" value="CAR42849"/>
    <property type="gene ID" value="PMI1347"/>
</dbReference>
<dbReference type="GeneID" id="6801562"/>
<dbReference type="KEGG" id="pmr:PMI1347"/>
<dbReference type="eggNOG" id="COG0133">
    <property type="taxonomic scope" value="Bacteria"/>
</dbReference>
<dbReference type="HOGENOM" id="CLU_016734_3_1_6"/>
<dbReference type="UniPathway" id="UPA00035">
    <property type="reaction ID" value="UER00044"/>
</dbReference>
<dbReference type="Proteomes" id="UP000008319">
    <property type="component" value="Chromosome"/>
</dbReference>
<dbReference type="GO" id="GO:0005737">
    <property type="term" value="C:cytoplasm"/>
    <property type="evidence" value="ECO:0007669"/>
    <property type="project" value="TreeGrafter"/>
</dbReference>
<dbReference type="GO" id="GO:0004834">
    <property type="term" value="F:tryptophan synthase activity"/>
    <property type="evidence" value="ECO:0007669"/>
    <property type="project" value="UniProtKB-UniRule"/>
</dbReference>
<dbReference type="CDD" id="cd06446">
    <property type="entry name" value="Trp-synth_B"/>
    <property type="match status" value="1"/>
</dbReference>
<dbReference type="FunFam" id="3.40.50.1100:FF:000001">
    <property type="entry name" value="Tryptophan synthase beta chain"/>
    <property type="match status" value="1"/>
</dbReference>
<dbReference type="FunFam" id="3.40.50.1100:FF:000004">
    <property type="entry name" value="Tryptophan synthase beta chain"/>
    <property type="match status" value="1"/>
</dbReference>
<dbReference type="Gene3D" id="3.40.50.1100">
    <property type="match status" value="2"/>
</dbReference>
<dbReference type="HAMAP" id="MF_00133">
    <property type="entry name" value="Trp_synth_beta"/>
    <property type="match status" value="1"/>
</dbReference>
<dbReference type="InterPro" id="IPR006653">
    <property type="entry name" value="Trp_synth_b_CS"/>
</dbReference>
<dbReference type="InterPro" id="IPR006654">
    <property type="entry name" value="Trp_synth_beta"/>
</dbReference>
<dbReference type="InterPro" id="IPR023026">
    <property type="entry name" value="Trp_synth_beta/beta-like"/>
</dbReference>
<dbReference type="InterPro" id="IPR001926">
    <property type="entry name" value="TrpB-like_PALP"/>
</dbReference>
<dbReference type="InterPro" id="IPR036052">
    <property type="entry name" value="TrpB-like_PALP_sf"/>
</dbReference>
<dbReference type="NCBIfam" id="TIGR00263">
    <property type="entry name" value="trpB"/>
    <property type="match status" value="1"/>
</dbReference>
<dbReference type="PANTHER" id="PTHR48077:SF3">
    <property type="entry name" value="TRYPTOPHAN SYNTHASE"/>
    <property type="match status" value="1"/>
</dbReference>
<dbReference type="PANTHER" id="PTHR48077">
    <property type="entry name" value="TRYPTOPHAN SYNTHASE-RELATED"/>
    <property type="match status" value="1"/>
</dbReference>
<dbReference type="Pfam" id="PF00291">
    <property type="entry name" value="PALP"/>
    <property type="match status" value="1"/>
</dbReference>
<dbReference type="PIRSF" id="PIRSF001413">
    <property type="entry name" value="Trp_syn_beta"/>
    <property type="match status" value="1"/>
</dbReference>
<dbReference type="SUPFAM" id="SSF53686">
    <property type="entry name" value="Tryptophan synthase beta subunit-like PLP-dependent enzymes"/>
    <property type="match status" value="1"/>
</dbReference>
<dbReference type="PROSITE" id="PS00168">
    <property type="entry name" value="TRP_SYNTHASE_BETA"/>
    <property type="match status" value="1"/>
</dbReference>
<reference key="1">
    <citation type="journal article" date="2008" name="J. Bacteriol.">
        <title>Complete genome sequence of uropathogenic Proteus mirabilis, a master of both adherence and motility.</title>
        <authorList>
            <person name="Pearson M.M."/>
            <person name="Sebaihia M."/>
            <person name="Churcher C."/>
            <person name="Quail M.A."/>
            <person name="Seshasayee A.S."/>
            <person name="Luscombe N.M."/>
            <person name="Abdellah Z."/>
            <person name="Arrosmith C."/>
            <person name="Atkin B."/>
            <person name="Chillingworth T."/>
            <person name="Hauser H."/>
            <person name="Jagels K."/>
            <person name="Moule S."/>
            <person name="Mungall K."/>
            <person name="Norbertczak H."/>
            <person name="Rabbinowitsch E."/>
            <person name="Walker D."/>
            <person name="Whithead S."/>
            <person name="Thomson N.R."/>
            <person name="Rather P.N."/>
            <person name="Parkhill J."/>
            <person name="Mobley H.L.T."/>
        </authorList>
    </citation>
    <scope>NUCLEOTIDE SEQUENCE [LARGE SCALE GENOMIC DNA]</scope>
    <source>
        <strain>HI4320</strain>
    </source>
</reference>
<sequence>MRKLNPYFGEFGGQYVPEILIPALDQLEQAFIDAQNDPSFQQEFQDLLKNYAGRPTALTLCRNLTQGTRTRLYLKREDLLHGGAHKTNQVLGQALLAKRMGKTEIIAETGAGQHGVATALACALLNMKCRIYMGAKDVERQSPNVFRMRLMGAEVIPVHSGSSTLKDACNEALRDWSGCYERAHYLLGTAAGPHPYPTIVREFQRMIGDEAKAQILAREGRLPDAVIACIGGGSNAIGLFASFIPETSVQLIGVEPAGKGIETGEHGAPLKHGKLGIYFGMKSPIMQTEEGQIEESYSISAGLDFPSVGPQHAHLNSIGRADYVSVTDDEAIEAFKTLSRREGIIPALESSHALAYALKLIAQNPDKEQLLIVNLSGRGDKDIFTVNDILAARGEI</sequence>
<name>TRPB_PROMH</name>
<evidence type="ECO:0000255" key="1">
    <source>
        <dbReference type="HAMAP-Rule" id="MF_00133"/>
    </source>
</evidence>
<feature type="chain" id="PRO_1000095803" description="Tryptophan synthase beta chain">
    <location>
        <begin position="1"/>
        <end position="396"/>
    </location>
</feature>
<feature type="modified residue" description="N6-(pyridoxal phosphate)lysine" evidence="1">
    <location>
        <position position="86"/>
    </location>
</feature>
<gene>
    <name evidence="1" type="primary">trpB</name>
    <name type="ordered locus">PMI1347</name>
</gene>
<keyword id="KW-0028">Amino-acid biosynthesis</keyword>
<keyword id="KW-0057">Aromatic amino acid biosynthesis</keyword>
<keyword id="KW-0456">Lyase</keyword>
<keyword id="KW-0663">Pyridoxal phosphate</keyword>
<keyword id="KW-1185">Reference proteome</keyword>
<keyword id="KW-0822">Tryptophan biosynthesis</keyword>
<organism>
    <name type="scientific">Proteus mirabilis (strain HI4320)</name>
    <dbReference type="NCBI Taxonomy" id="529507"/>
    <lineage>
        <taxon>Bacteria</taxon>
        <taxon>Pseudomonadati</taxon>
        <taxon>Pseudomonadota</taxon>
        <taxon>Gammaproteobacteria</taxon>
        <taxon>Enterobacterales</taxon>
        <taxon>Morganellaceae</taxon>
        <taxon>Proteus</taxon>
    </lineage>
</organism>
<protein>
    <recommendedName>
        <fullName evidence="1">Tryptophan synthase beta chain</fullName>
        <ecNumber evidence="1">4.2.1.20</ecNumber>
    </recommendedName>
</protein>
<accession>B4EWH7</accession>